<protein>
    <recommendedName>
        <fullName evidence="1">LexA repressor</fullName>
        <ecNumber evidence="1">3.4.21.88</ecNumber>
    </recommendedName>
</protein>
<comment type="function">
    <text evidence="1">Represses a number of genes involved in the response to DNA damage (SOS response), including recA and lexA. In the presence of single-stranded DNA, RecA interacts with LexA causing an autocatalytic cleavage which disrupts the DNA-binding part of LexA, leading to derepression of the SOS regulon and eventually DNA repair.</text>
</comment>
<comment type="catalytic activity">
    <reaction evidence="1">
        <text>Hydrolysis of Ala-|-Gly bond in repressor LexA.</text>
        <dbReference type="EC" id="3.4.21.88"/>
    </reaction>
</comment>
<comment type="subunit">
    <text evidence="1">Homodimer.</text>
</comment>
<comment type="similarity">
    <text evidence="1">Belongs to the peptidase S24 family.</text>
</comment>
<dbReference type="EC" id="3.4.21.88" evidence="1"/>
<dbReference type="EMBL" id="CP000507">
    <property type="protein sequence ID" value="ABM01684.1"/>
    <property type="molecule type" value="Genomic_DNA"/>
</dbReference>
<dbReference type="RefSeq" id="WP_011761587.1">
    <property type="nucleotide sequence ID" value="NC_008700.1"/>
</dbReference>
<dbReference type="SMR" id="A1SBC7"/>
<dbReference type="STRING" id="326297.Sama_3481"/>
<dbReference type="MEROPS" id="S24.001"/>
<dbReference type="KEGG" id="saz:Sama_3481"/>
<dbReference type="eggNOG" id="COG1974">
    <property type="taxonomic scope" value="Bacteria"/>
</dbReference>
<dbReference type="HOGENOM" id="CLU_066192_45_3_6"/>
<dbReference type="OrthoDB" id="9802364at2"/>
<dbReference type="Proteomes" id="UP000009175">
    <property type="component" value="Chromosome"/>
</dbReference>
<dbReference type="GO" id="GO:0003677">
    <property type="term" value="F:DNA binding"/>
    <property type="evidence" value="ECO:0007669"/>
    <property type="project" value="UniProtKB-UniRule"/>
</dbReference>
<dbReference type="GO" id="GO:0004252">
    <property type="term" value="F:serine-type endopeptidase activity"/>
    <property type="evidence" value="ECO:0007669"/>
    <property type="project" value="UniProtKB-UniRule"/>
</dbReference>
<dbReference type="GO" id="GO:0006281">
    <property type="term" value="P:DNA repair"/>
    <property type="evidence" value="ECO:0007669"/>
    <property type="project" value="UniProtKB-UniRule"/>
</dbReference>
<dbReference type="GO" id="GO:0006260">
    <property type="term" value="P:DNA replication"/>
    <property type="evidence" value="ECO:0007669"/>
    <property type="project" value="UniProtKB-UniRule"/>
</dbReference>
<dbReference type="GO" id="GO:0045892">
    <property type="term" value="P:negative regulation of DNA-templated transcription"/>
    <property type="evidence" value="ECO:0007669"/>
    <property type="project" value="UniProtKB-UniRule"/>
</dbReference>
<dbReference type="GO" id="GO:0006508">
    <property type="term" value="P:proteolysis"/>
    <property type="evidence" value="ECO:0007669"/>
    <property type="project" value="InterPro"/>
</dbReference>
<dbReference type="GO" id="GO:0009432">
    <property type="term" value="P:SOS response"/>
    <property type="evidence" value="ECO:0007669"/>
    <property type="project" value="UniProtKB-UniRule"/>
</dbReference>
<dbReference type="CDD" id="cd06529">
    <property type="entry name" value="S24_LexA-like"/>
    <property type="match status" value="1"/>
</dbReference>
<dbReference type="FunFam" id="1.10.10.10:FF:000009">
    <property type="entry name" value="LexA repressor"/>
    <property type="match status" value="1"/>
</dbReference>
<dbReference type="FunFam" id="2.10.109.10:FF:000001">
    <property type="entry name" value="LexA repressor"/>
    <property type="match status" value="1"/>
</dbReference>
<dbReference type="Gene3D" id="2.10.109.10">
    <property type="entry name" value="Umud Fragment, subunit A"/>
    <property type="match status" value="1"/>
</dbReference>
<dbReference type="Gene3D" id="1.10.10.10">
    <property type="entry name" value="Winged helix-like DNA-binding domain superfamily/Winged helix DNA-binding domain"/>
    <property type="match status" value="1"/>
</dbReference>
<dbReference type="HAMAP" id="MF_00015">
    <property type="entry name" value="LexA"/>
    <property type="match status" value="1"/>
</dbReference>
<dbReference type="InterPro" id="IPR006200">
    <property type="entry name" value="LexA"/>
</dbReference>
<dbReference type="InterPro" id="IPR039418">
    <property type="entry name" value="LexA-like"/>
</dbReference>
<dbReference type="InterPro" id="IPR036286">
    <property type="entry name" value="LexA/Signal_pep-like_sf"/>
</dbReference>
<dbReference type="InterPro" id="IPR006199">
    <property type="entry name" value="LexA_DNA-bd_dom"/>
</dbReference>
<dbReference type="InterPro" id="IPR050077">
    <property type="entry name" value="LexA_repressor"/>
</dbReference>
<dbReference type="InterPro" id="IPR006197">
    <property type="entry name" value="Peptidase_S24_LexA"/>
</dbReference>
<dbReference type="InterPro" id="IPR015927">
    <property type="entry name" value="Peptidase_S24_S26A/B/C"/>
</dbReference>
<dbReference type="InterPro" id="IPR036388">
    <property type="entry name" value="WH-like_DNA-bd_sf"/>
</dbReference>
<dbReference type="InterPro" id="IPR036390">
    <property type="entry name" value="WH_DNA-bd_sf"/>
</dbReference>
<dbReference type="NCBIfam" id="TIGR00498">
    <property type="entry name" value="lexA"/>
    <property type="match status" value="1"/>
</dbReference>
<dbReference type="PANTHER" id="PTHR33516">
    <property type="entry name" value="LEXA REPRESSOR"/>
    <property type="match status" value="1"/>
</dbReference>
<dbReference type="PANTHER" id="PTHR33516:SF2">
    <property type="entry name" value="LEXA REPRESSOR-RELATED"/>
    <property type="match status" value="1"/>
</dbReference>
<dbReference type="Pfam" id="PF01726">
    <property type="entry name" value="LexA_DNA_bind"/>
    <property type="match status" value="1"/>
</dbReference>
<dbReference type="Pfam" id="PF00717">
    <property type="entry name" value="Peptidase_S24"/>
    <property type="match status" value="1"/>
</dbReference>
<dbReference type="PRINTS" id="PR00726">
    <property type="entry name" value="LEXASERPTASE"/>
</dbReference>
<dbReference type="SUPFAM" id="SSF51306">
    <property type="entry name" value="LexA/Signal peptidase"/>
    <property type="match status" value="1"/>
</dbReference>
<dbReference type="SUPFAM" id="SSF46785">
    <property type="entry name" value="Winged helix' DNA-binding domain"/>
    <property type="match status" value="1"/>
</dbReference>
<sequence length="207" mass="22732">MRPLTPRQAEILDLIKRNIAETGMPPTRAEIASRLGFKSANAAEEHLKALAKKGCIEIMPGTSRGIRLAGDELEDQPDPGLPLIGQVAAGEPILAQEHVEQYYQVDPAMFRPHADFLLRVRGDSMKDIGILDGDLLAVHKMNQARNGQVVVARVEDDVTVKRFEKQGNVVYLHAENEAFAPIRVDLANQSLTIEGLAVGVIRNGDWL</sequence>
<name>LEXA_SHEAM</name>
<evidence type="ECO:0000255" key="1">
    <source>
        <dbReference type="HAMAP-Rule" id="MF_00015"/>
    </source>
</evidence>
<proteinExistence type="inferred from homology"/>
<organism>
    <name type="scientific">Shewanella amazonensis (strain ATCC BAA-1098 / SB2B)</name>
    <dbReference type="NCBI Taxonomy" id="326297"/>
    <lineage>
        <taxon>Bacteria</taxon>
        <taxon>Pseudomonadati</taxon>
        <taxon>Pseudomonadota</taxon>
        <taxon>Gammaproteobacteria</taxon>
        <taxon>Alteromonadales</taxon>
        <taxon>Shewanellaceae</taxon>
        <taxon>Shewanella</taxon>
    </lineage>
</organism>
<gene>
    <name evidence="1" type="primary">lexA</name>
    <name type="ordered locus">Sama_3481</name>
</gene>
<feature type="chain" id="PRO_1000001332" description="LexA repressor">
    <location>
        <begin position="1"/>
        <end position="207"/>
    </location>
</feature>
<feature type="DNA-binding region" description="H-T-H motif" evidence="1">
    <location>
        <begin position="28"/>
        <end position="48"/>
    </location>
</feature>
<feature type="active site" description="For autocatalytic cleavage activity" evidence="1">
    <location>
        <position position="124"/>
    </location>
</feature>
<feature type="active site" description="For autocatalytic cleavage activity" evidence="1">
    <location>
        <position position="161"/>
    </location>
</feature>
<feature type="site" description="Cleavage; by autolysis" evidence="1">
    <location>
        <begin position="89"/>
        <end position="90"/>
    </location>
</feature>
<accession>A1SBC7</accession>
<reference key="1">
    <citation type="submission" date="2006-12" db="EMBL/GenBank/DDBJ databases">
        <title>Complete sequence of Shewanella amazonensis SB2B.</title>
        <authorList>
            <consortium name="US DOE Joint Genome Institute"/>
            <person name="Copeland A."/>
            <person name="Lucas S."/>
            <person name="Lapidus A."/>
            <person name="Barry K."/>
            <person name="Detter J.C."/>
            <person name="Glavina del Rio T."/>
            <person name="Hammon N."/>
            <person name="Israni S."/>
            <person name="Dalin E."/>
            <person name="Tice H."/>
            <person name="Pitluck S."/>
            <person name="Munk A.C."/>
            <person name="Brettin T."/>
            <person name="Bruce D."/>
            <person name="Han C."/>
            <person name="Tapia R."/>
            <person name="Gilna P."/>
            <person name="Schmutz J."/>
            <person name="Larimer F."/>
            <person name="Land M."/>
            <person name="Hauser L."/>
            <person name="Kyrpides N."/>
            <person name="Mikhailova N."/>
            <person name="Fredrickson J."/>
            <person name="Richardson P."/>
        </authorList>
    </citation>
    <scope>NUCLEOTIDE SEQUENCE [LARGE SCALE GENOMIC DNA]</scope>
    <source>
        <strain>ATCC BAA-1098 / SB2B</strain>
    </source>
</reference>
<keyword id="KW-0068">Autocatalytic cleavage</keyword>
<keyword id="KW-0227">DNA damage</keyword>
<keyword id="KW-0234">DNA repair</keyword>
<keyword id="KW-0235">DNA replication</keyword>
<keyword id="KW-0238">DNA-binding</keyword>
<keyword id="KW-0378">Hydrolase</keyword>
<keyword id="KW-1185">Reference proteome</keyword>
<keyword id="KW-0678">Repressor</keyword>
<keyword id="KW-0742">SOS response</keyword>
<keyword id="KW-0804">Transcription</keyword>
<keyword id="KW-0805">Transcription regulation</keyword>